<organism>
    <name type="scientific">Xenopus laevis</name>
    <name type="common">African clawed frog</name>
    <dbReference type="NCBI Taxonomy" id="8355"/>
    <lineage>
        <taxon>Eukaryota</taxon>
        <taxon>Metazoa</taxon>
        <taxon>Chordata</taxon>
        <taxon>Craniata</taxon>
        <taxon>Vertebrata</taxon>
        <taxon>Euteleostomi</taxon>
        <taxon>Amphibia</taxon>
        <taxon>Batrachia</taxon>
        <taxon>Anura</taxon>
        <taxon>Pipoidea</taxon>
        <taxon>Pipidae</taxon>
        <taxon>Xenopodinae</taxon>
        <taxon>Xenopus</taxon>
        <taxon>Xenopus</taxon>
    </lineage>
</organism>
<reference evidence="8 9" key="1">
    <citation type="journal article" date="2003" name="Development">
        <title>Selective degradation of excess Ldb1 by Rnf12/RLIM confers proper Ldb1 expression levels and Xlim-1/Ldb1 stoichiometry in Xenopus organizer functions.</title>
        <authorList>
            <person name="Hiratani I."/>
            <person name="Yamamoto N."/>
            <person name="Mochizuki T."/>
            <person name="Ohmori S.-Y."/>
            <person name="Taira M."/>
        </authorList>
    </citation>
    <scope>NUCLEOTIDE SEQUENCE [MRNA]</scope>
    <scope>TISSUE SPECIFICITY</scope>
    <scope>DEVELOPMENTAL STAGE</scope>
    <source>
        <tissue evidence="6">Gastrula</tissue>
    </source>
</reference>
<dbReference type="EC" id="2.3.2.27"/>
<dbReference type="EMBL" id="AB114040">
    <property type="protein sequence ID" value="BAC81442.1"/>
    <property type="molecule type" value="mRNA"/>
</dbReference>
<dbReference type="RefSeq" id="NP_001108244.1">
    <property type="nucleotide sequence ID" value="NM_001114772.1"/>
</dbReference>
<dbReference type="SMR" id="Q7T037"/>
<dbReference type="GeneID" id="100137618"/>
<dbReference type="KEGG" id="xla:100137618"/>
<dbReference type="AGR" id="Xenbase:XB-GENE-6256130"/>
<dbReference type="CTD" id="100137618"/>
<dbReference type="Xenbase" id="XB-GENE-6256130">
    <property type="gene designation" value="rlim.L"/>
</dbReference>
<dbReference type="OrthoDB" id="8062037at2759"/>
<dbReference type="UniPathway" id="UPA00143"/>
<dbReference type="Proteomes" id="UP000186698">
    <property type="component" value="Chromosome 8L"/>
</dbReference>
<dbReference type="Bgee" id="100137618">
    <property type="expression patterns" value="Expressed in blastula and 19 other cell types or tissues"/>
</dbReference>
<dbReference type="GO" id="GO:0005634">
    <property type="term" value="C:nucleus"/>
    <property type="evidence" value="ECO:0000250"/>
    <property type="project" value="UniProtKB"/>
</dbReference>
<dbReference type="GO" id="GO:0140297">
    <property type="term" value="F:DNA-binding transcription factor binding"/>
    <property type="evidence" value="ECO:0000250"/>
    <property type="project" value="UniProtKB"/>
</dbReference>
<dbReference type="GO" id="GO:0042802">
    <property type="term" value="F:identical protein binding"/>
    <property type="evidence" value="ECO:0000250"/>
    <property type="project" value="UniProtKB"/>
</dbReference>
<dbReference type="GO" id="GO:0061630">
    <property type="term" value="F:ubiquitin protein ligase activity"/>
    <property type="evidence" value="ECO:0000318"/>
    <property type="project" value="GO_Central"/>
</dbReference>
<dbReference type="GO" id="GO:0004842">
    <property type="term" value="F:ubiquitin-protein transferase activity"/>
    <property type="evidence" value="ECO:0000250"/>
    <property type="project" value="UniProtKB"/>
</dbReference>
<dbReference type="GO" id="GO:0008270">
    <property type="term" value="F:zinc ion binding"/>
    <property type="evidence" value="ECO:0007669"/>
    <property type="project" value="UniProtKB-KW"/>
</dbReference>
<dbReference type="GO" id="GO:0000578">
    <property type="term" value="P:embryonic axis specification"/>
    <property type="evidence" value="ECO:0000250"/>
    <property type="project" value="UniProtKB"/>
</dbReference>
<dbReference type="GO" id="GO:0016567">
    <property type="term" value="P:protein ubiquitination"/>
    <property type="evidence" value="ECO:0000250"/>
    <property type="project" value="UniProtKB"/>
</dbReference>
<dbReference type="GO" id="GO:0006511">
    <property type="term" value="P:ubiquitin-dependent protein catabolic process"/>
    <property type="evidence" value="ECO:0000250"/>
    <property type="project" value="UniProtKB"/>
</dbReference>
<dbReference type="CDD" id="cd16674">
    <property type="entry name" value="RING-H2_RNF12"/>
    <property type="match status" value="1"/>
</dbReference>
<dbReference type="FunFam" id="3.30.40.10:FF:000054">
    <property type="entry name" value="E3 ubiquitin-protein ligase RLIM isoform X1"/>
    <property type="match status" value="1"/>
</dbReference>
<dbReference type="Gene3D" id="3.30.40.10">
    <property type="entry name" value="Zinc/RING finger domain, C3HC4 (zinc finger)"/>
    <property type="match status" value="1"/>
</dbReference>
<dbReference type="InterPro" id="IPR051834">
    <property type="entry name" value="RING_finger_E3_ligase"/>
</dbReference>
<dbReference type="InterPro" id="IPR001841">
    <property type="entry name" value="Znf_RING"/>
</dbReference>
<dbReference type="InterPro" id="IPR013083">
    <property type="entry name" value="Znf_RING/FYVE/PHD"/>
</dbReference>
<dbReference type="PANTHER" id="PTHR45931:SF4">
    <property type="entry name" value="E3 UBIQUITIN-PROTEIN LIGASE RLIM"/>
    <property type="match status" value="1"/>
</dbReference>
<dbReference type="PANTHER" id="PTHR45931">
    <property type="entry name" value="SI:CH211-59O9.10"/>
    <property type="match status" value="1"/>
</dbReference>
<dbReference type="Pfam" id="PF13639">
    <property type="entry name" value="zf-RING_2"/>
    <property type="match status" value="1"/>
</dbReference>
<dbReference type="SMART" id="SM00184">
    <property type="entry name" value="RING"/>
    <property type="match status" value="1"/>
</dbReference>
<dbReference type="SUPFAM" id="SSF57850">
    <property type="entry name" value="RING/U-box"/>
    <property type="match status" value="1"/>
</dbReference>
<dbReference type="PROSITE" id="PS50089">
    <property type="entry name" value="ZF_RING_2"/>
    <property type="match status" value="1"/>
</dbReference>
<evidence type="ECO:0000250" key="1"/>
<evidence type="ECO:0000250" key="2">
    <source>
        <dbReference type="UniProtKB" id="Q641J8"/>
    </source>
</evidence>
<evidence type="ECO:0000255" key="3"/>
<evidence type="ECO:0000255" key="4">
    <source>
        <dbReference type="PROSITE-ProRule" id="PRU00175"/>
    </source>
</evidence>
<evidence type="ECO:0000256" key="5">
    <source>
        <dbReference type="SAM" id="MobiDB-lite"/>
    </source>
</evidence>
<evidence type="ECO:0000269" key="6">
    <source>
    </source>
</evidence>
<evidence type="ECO:0000303" key="7">
    <source>
    </source>
</evidence>
<evidence type="ECO:0000305" key="8"/>
<evidence type="ECO:0000312" key="9">
    <source>
        <dbReference type="EMBL" id="BAC81442.1"/>
    </source>
</evidence>
<sequence length="757" mass="82892">MESADSTGKGSTEQSESQRQSQMDRLDREEAFYQFVNNLNDEDYRLMRDNNLLGTPGEITKEELLQRLQQIKEGPPQPSTEETRGDSVSTGEDPAEDSSNGDSIIDWLNSVRQTGNTTRSGQRGNQSWRAVSRTNPNSGDFRFSLEINVNRTSGTASMPSLDQSAEMPGPEDMEVSSQGEAENVPEPETVPESIREPESVDEPVSVAEPVSVAEPVSVAEPESVAEPESVAASVPVPESVPEPESVPEPESVPEPESVPEPESVPEPESVPEPESVPEPESVPEPESVPEPESVPEPESVPEPESVPEPESIAEPESVPVPESVPVATRPAPVEVTVEEAPIQRGQRRARSRSPDQRRTRARTDRSRSPLYQTVDPPIRRAQHSSSQTVDASNTEEAEGSSRTRHHVSSQVHSSSSNETEGSSRTRQHITARQQALGTEGQSQSTVHLSNPESRSSSQTPQTDSPSNAETTGTGQRPPTIVLDLQVRRVRPGDYRQRDSIANRTRSRSQTPNNTVTYESERGGFRRTFSRSERAGVRTYVSTIRIPIRRILNTGLSETTSVAIQTMLRQIMTGFGELSYFMYNDNDADPNNPTAVSPPAAVPGEVQNNPSAEVRAPIAEPAEPVAPVESDEGSNVATSATRREGRNSRGGVTLEESGSLPFLSLAQFFLLNEDDDDQPRGLTKEQIDNLSTRNYGENDALKTCSVCITEYTEGNKLRKLPCSHEYHIHCIDRWLSENSTCPICRRAVLVAGNRESIV</sequence>
<accession>Q7T037</accession>
<comment type="function">
    <text evidence="1">Acts as an E3 ubiquitin-protein ligase specific for ldb1, mediating ubiquitination and proteasome-dependent degradation of excess ldb1 in a RING-dependent manner. Does not degrade ldb1 bound to lhx1/lim1, nor lim1 itself and thus contributes to the establishment of proper ldb1-lhx1/lim1 stoichiometry and the formation of a ldb1-lhx1/lim1 complex. Interferes with Spemann organizer function and suppresses secondary axis formation induced by ldb1 and lhx1/lim1 (By similarity).</text>
</comment>
<comment type="catalytic activity">
    <reaction>
        <text>S-ubiquitinyl-[E2 ubiquitin-conjugating enzyme]-L-cysteine + [acceptor protein]-L-lysine = [E2 ubiquitin-conjugating enzyme]-L-cysteine + N(6)-ubiquitinyl-[acceptor protein]-L-lysine.</text>
        <dbReference type="EC" id="2.3.2.27"/>
    </reaction>
</comment>
<comment type="pathway">
    <text>Protein modification; protein ubiquitination.</text>
</comment>
<comment type="subunit">
    <text evidence="2">Forms homodimers through the C-terminal region. The N-terminus interacts with the homeobox of LIM/homeobox factor lhx1/lim1, with lhx3/lim3 and lhx5/lim5, and with the N-terminus of ldb1 (By similarity).</text>
</comment>
<comment type="subcellular location">
    <subcellularLocation>
        <location evidence="1">Nucleus</location>
    </subcellularLocation>
</comment>
<comment type="tissue specificity">
    <text evidence="6">Shows overlapping expression with lhx1/lim1 and ldb1 in the gastrula mesoderm, and expression overlaps with ldb1 throughout early embryogenesis. After gastrulation, expression is gradually restricted to tissues originated from the ectoderm, the neuroectoderm, neural crest and epidermis, and subsequently to the neural tube as well as the head and tailbud region.</text>
</comment>
<comment type="developmental stage">
    <text evidence="6">Expressed both maternally and zygotically. Expressed at the cleavage stage, with expression levels remaining constant throughout early embryogenesis, with a slight increase at the late gastrula stage.</text>
</comment>
<comment type="similarity">
    <text evidence="8">Belongs to the RNF12 family.</text>
</comment>
<feature type="chain" id="PRO_0000314057" description="E3 ubiquitin-protein ligase RNF12-B">
    <location>
        <begin position="1"/>
        <end position="757"/>
    </location>
</feature>
<feature type="repeat" description="1" evidence="3">
    <location>
        <begin position="197"/>
        <end position="202"/>
    </location>
</feature>
<feature type="repeat" description="2" evidence="3">
    <location>
        <begin position="203"/>
        <end position="208"/>
    </location>
</feature>
<feature type="repeat" description="3" evidence="3">
    <location>
        <begin position="209"/>
        <end position="214"/>
    </location>
</feature>
<feature type="repeat" description="4" evidence="3">
    <location>
        <begin position="215"/>
        <end position="220"/>
    </location>
</feature>
<feature type="repeat" description="5" evidence="3">
    <location>
        <begin position="221"/>
        <end position="226"/>
    </location>
</feature>
<feature type="repeat" description="6" evidence="3">
    <location>
        <begin position="227"/>
        <end position="232"/>
    </location>
</feature>
<feature type="repeat" description="7" evidence="3">
    <location>
        <begin position="237"/>
        <end position="242"/>
    </location>
</feature>
<feature type="repeat" description="8" evidence="3">
    <location>
        <begin position="243"/>
        <end position="248"/>
    </location>
</feature>
<feature type="repeat" description="9" evidence="3">
    <location>
        <begin position="249"/>
        <end position="254"/>
    </location>
</feature>
<feature type="repeat" description="10" evidence="3">
    <location>
        <begin position="255"/>
        <end position="260"/>
    </location>
</feature>
<feature type="repeat" description="11" evidence="3">
    <location>
        <begin position="261"/>
        <end position="266"/>
    </location>
</feature>
<feature type="repeat" description="12" evidence="3">
    <location>
        <begin position="267"/>
        <end position="272"/>
    </location>
</feature>
<feature type="repeat" description="13" evidence="3">
    <location>
        <begin position="273"/>
        <end position="278"/>
    </location>
</feature>
<feature type="repeat" description="14" evidence="3">
    <location>
        <begin position="279"/>
        <end position="284"/>
    </location>
</feature>
<feature type="repeat" description="15" evidence="3">
    <location>
        <begin position="285"/>
        <end position="290"/>
    </location>
</feature>
<feature type="repeat" description="16" evidence="3">
    <location>
        <begin position="291"/>
        <end position="296"/>
    </location>
</feature>
<feature type="repeat" description="17" evidence="3">
    <location>
        <begin position="297"/>
        <end position="302"/>
    </location>
</feature>
<feature type="repeat" description="18" evidence="3">
    <location>
        <begin position="303"/>
        <end position="308"/>
    </location>
</feature>
<feature type="repeat" description="19" evidence="3">
    <location>
        <begin position="309"/>
        <end position="314"/>
    </location>
</feature>
<feature type="repeat" description="20" evidence="3">
    <location>
        <begin position="315"/>
        <end position="320"/>
    </location>
</feature>
<feature type="repeat" description="21" evidence="3">
    <location>
        <begin position="321"/>
        <end position="326"/>
    </location>
</feature>
<feature type="zinc finger region" description="RING-type; atypical" evidence="4">
    <location>
        <begin position="703"/>
        <end position="744"/>
    </location>
</feature>
<feature type="region of interest" description="Disordered" evidence="5">
    <location>
        <begin position="1"/>
        <end position="29"/>
    </location>
</feature>
<feature type="region of interest" description="Disordered" evidence="5">
    <location>
        <begin position="68"/>
        <end position="519"/>
    </location>
</feature>
<feature type="region of interest" description="21 X 6 AA approximate repeats of P-[EV]-S-V-[PA]-[EV]" evidence="3">
    <location>
        <begin position="197"/>
        <end position="326"/>
    </location>
</feature>
<feature type="region of interest" description="Disordered" evidence="5">
    <location>
        <begin position="619"/>
        <end position="652"/>
    </location>
</feature>
<feature type="short sequence motif" description="PDZ-binding" evidence="3 7">
    <location>
        <begin position="754"/>
        <end position="757"/>
    </location>
</feature>
<feature type="compositionally biased region" description="Polar residues" evidence="5">
    <location>
        <begin position="1"/>
        <end position="10"/>
    </location>
</feature>
<feature type="compositionally biased region" description="Low complexity" evidence="5">
    <location>
        <begin position="11"/>
        <end position="21"/>
    </location>
</feature>
<feature type="compositionally biased region" description="Polar residues" evidence="5">
    <location>
        <begin position="110"/>
        <end position="138"/>
    </location>
</feature>
<feature type="compositionally biased region" description="Polar residues" evidence="5">
    <location>
        <begin position="147"/>
        <end position="163"/>
    </location>
</feature>
<feature type="compositionally biased region" description="Low complexity" evidence="5">
    <location>
        <begin position="202"/>
        <end position="237"/>
    </location>
</feature>
<feature type="compositionally biased region" description="Acidic residues" evidence="5">
    <location>
        <begin position="245"/>
        <end position="313"/>
    </location>
</feature>
<feature type="compositionally biased region" description="Low complexity" evidence="5">
    <location>
        <begin position="314"/>
        <end position="327"/>
    </location>
</feature>
<feature type="compositionally biased region" description="Basic and acidic residues" evidence="5">
    <location>
        <begin position="352"/>
        <end position="367"/>
    </location>
</feature>
<feature type="compositionally biased region" description="Polar residues" evidence="5">
    <location>
        <begin position="383"/>
        <end position="392"/>
    </location>
</feature>
<feature type="compositionally biased region" description="Low complexity" evidence="5">
    <location>
        <begin position="408"/>
        <end position="424"/>
    </location>
</feature>
<feature type="compositionally biased region" description="Polar residues" evidence="5">
    <location>
        <begin position="428"/>
        <end position="452"/>
    </location>
</feature>
<feature type="compositionally biased region" description="Low complexity" evidence="5">
    <location>
        <begin position="453"/>
        <end position="466"/>
    </location>
</feature>
<feature type="compositionally biased region" description="Polar residues" evidence="5">
    <location>
        <begin position="467"/>
        <end position="476"/>
    </location>
</feature>
<feature type="compositionally biased region" description="Basic and acidic residues" evidence="5">
    <location>
        <begin position="490"/>
        <end position="500"/>
    </location>
</feature>
<feature type="compositionally biased region" description="Polar residues" evidence="5">
    <location>
        <begin position="501"/>
        <end position="517"/>
    </location>
</feature>
<name>RF12B_XENLA</name>
<proteinExistence type="evidence at transcript level"/>
<keyword id="KW-0217">Developmental protein</keyword>
<keyword id="KW-0479">Metal-binding</keyword>
<keyword id="KW-0539">Nucleus</keyword>
<keyword id="KW-1185">Reference proteome</keyword>
<keyword id="KW-0677">Repeat</keyword>
<keyword id="KW-0808">Transferase</keyword>
<keyword id="KW-0833">Ubl conjugation pathway</keyword>
<keyword id="KW-0862">Zinc</keyword>
<keyword id="KW-0863">Zinc-finger</keyword>
<gene>
    <name type="primary">rnf12-b</name>
</gene>
<protein>
    <recommendedName>
        <fullName>E3 ubiquitin-protein ligase RNF12-B</fullName>
        <ecNumber>2.3.2.27</ecNumber>
    </recommendedName>
    <alternativeName>
        <fullName>RING finger protein 12-B</fullName>
    </alternativeName>
    <alternativeName>
        <fullName evidence="8">RING-type E3 ubiquitin transferase RNF12-B</fullName>
    </alternativeName>
    <alternativeName>
        <fullName>XRnf12B</fullName>
    </alternativeName>
</protein>